<protein>
    <recommendedName>
        <fullName evidence="1">Aspartate/glutamate leucyltransferase</fullName>
        <ecNumber evidence="1">2.3.2.29</ecNumber>
    </recommendedName>
</protein>
<accession>C3LN58</accession>
<gene>
    <name evidence="1" type="primary">bpt</name>
    <name type="ordered locus">VCM66_1676</name>
</gene>
<name>BPT_VIBCM</name>
<keyword id="KW-0012">Acyltransferase</keyword>
<keyword id="KW-0963">Cytoplasm</keyword>
<keyword id="KW-0808">Transferase</keyword>
<comment type="function">
    <text evidence="1">Functions in the N-end rule pathway of protein degradation where it conjugates Leu from its aminoacyl-tRNA to the N-termini of proteins containing an N-terminal aspartate or glutamate.</text>
</comment>
<comment type="catalytic activity">
    <reaction evidence="1">
        <text>N-terminal L-glutamyl-[protein] + L-leucyl-tRNA(Leu) = N-terminal L-leucyl-L-glutamyl-[protein] + tRNA(Leu) + H(+)</text>
        <dbReference type="Rhea" id="RHEA:50412"/>
        <dbReference type="Rhea" id="RHEA-COMP:9613"/>
        <dbReference type="Rhea" id="RHEA-COMP:9622"/>
        <dbReference type="Rhea" id="RHEA-COMP:12664"/>
        <dbReference type="Rhea" id="RHEA-COMP:12668"/>
        <dbReference type="ChEBI" id="CHEBI:15378"/>
        <dbReference type="ChEBI" id="CHEBI:64721"/>
        <dbReference type="ChEBI" id="CHEBI:78442"/>
        <dbReference type="ChEBI" id="CHEBI:78494"/>
        <dbReference type="ChEBI" id="CHEBI:133041"/>
        <dbReference type="EC" id="2.3.2.29"/>
    </reaction>
</comment>
<comment type="catalytic activity">
    <reaction evidence="1">
        <text>N-terminal L-aspartyl-[protein] + L-leucyl-tRNA(Leu) = N-terminal L-leucyl-L-aspartyl-[protein] + tRNA(Leu) + H(+)</text>
        <dbReference type="Rhea" id="RHEA:50420"/>
        <dbReference type="Rhea" id="RHEA-COMP:9613"/>
        <dbReference type="Rhea" id="RHEA-COMP:9622"/>
        <dbReference type="Rhea" id="RHEA-COMP:12669"/>
        <dbReference type="Rhea" id="RHEA-COMP:12674"/>
        <dbReference type="ChEBI" id="CHEBI:15378"/>
        <dbReference type="ChEBI" id="CHEBI:64720"/>
        <dbReference type="ChEBI" id="CHEBI:78442"/>
        <dbReference type="ChEBI" id="CHEBI:78494"/>
        <dbReference type="ChEBI" id="CHEBI:133042"/>
        <dbReference type="EC" id="2.3.2.29"/>
    </reaction>
</comment>
<comment type="subcellular location">
    <subcellularLocation>
        <location evidence="1">Cytoplasm</location>
    </subcellularLocation>
</comment>
<comment type="similarity">
    <text evidence="1">Belongs to the R-transferase family. Bpt subfamily.</text>
</comment>
<proteinExistence type="inferred from homology"/>
<organism>
    <name type="scientific">Vibrio cholerae serotype O1 (strain M66-2)</name>
    <dbReference type="NCBI Taxonomy" id="579112"/>
    <lineage>
        <taxon>Bacteria</taxon>
        <taxon>Pseudomonadati</taxon>
        <taxon>Pseudomonadota</taxon>
        <taxon>Gammaproteobacteria</taxon>
        <taxon>Vibrionales</taxon>
        <taxon>Vibrionaceae</taxon>
        <taxon>Vibrio</taxon>
    </lineage>
</organism>
<feature type="chain" id="PRO_1000147808" description="Aspartate/glutamate leucyltransferase">
    <location>
        <begin position="1"/>
        <end position="233"/>
    </location>
</feature>
<reference key="1">
    <citation type="journal article" date="2008" name="PLoS ONE">
        <title>A recalibrated molecular clock and independent origins for the cholera pandemic clones.</title>
        <authorList>
            <person name="Feng L."/>
            <person name="Reeves P.R."/>
            <person name="Lan R."/>
            <person name="Ren Y."/>
            <person name="Gao C."/>
            <person name="Zhou Z."/>
            <person name="Ren Y."/>
            <person name="Cheng J."/>
            <person name="Wang W."/>
            <person name="Wang J."/>
            <person name="Qian W."/>
            <person name="Li D."/>
            <person name="Wang L."/>
        </authorList>
    </citation>
    <scope>NUCLEOTIDE SEQUENCE [LARGE SCALE GENOMIC DNA]</scope>
    <source>
        <strain>M66-2</strain>
    </source>
</reference>
<evidence type="ECO:0000255" key="1">
    <source>
        <dbReference type="HAMAP-Rule" id="MF_00689"/>
    </source>
</evidence>
<sequence length="233" mass="27350">MSSDIQQIRIGLTNNHPCSYLADRMERVAVAIDPQMQTPETYEVLMANGFRRSGDTIYKPHCDHCQSCQALRIPAPDFVPSKSQKRLLKLLSQEFHWQLKPELDEDWYTLYARYIFARHRHGSMYPPNKMEFAKFARAKWLNTQYLHLYQGEKLVAIAVTDLLPNSASAFYTFYDPDISISLGTLAVLCQLNYCQQTKKQWLYLGYQIDECPAMNYKVRFNPHQRLVNQRWRG</sequence>
<dbReference type="EC" id="2.3.2.29" evidence="1"/>
<dbReference type="EMBL" id="CP001233">
    <property type="protein sequence ID" value="ACP05984.1"/>
    <property type="molecule type" value="Genomic_DNA"/>
</dbReference>
<dbReference type="RefSeq" id="WP_000093315.1">
    <property type="nucleotide sequence ID" value="NC_012578.1"/>
</dbReference>
<dbReference type="SMR" id="C3LN58"/>
<dbReference type="KEGG" id="vcm:VCM66_1676"/>
<dbReference type="HOGENOM" id="CLU_077607_0_0_6"/>
<dbReference type="Proteomes" id="UP000001217">
    <property type="component" value="Chromosome I"/>
</dbReference>
<dbReference type="GO" id="GO:0005737">
    <property type="term" value="C:cytoplasm"/>
    <property type="evidence" value="ECO:0007669"/>
    <property type="project" value="UniProtKB-SubCell"/>
</dbReference>
<dbReference type="GO" id="GO:0004057">
    <property type="term" value="F:arginyl-tRNA--protein transferase activity"/>
    <property type="evidence" value="ECO:0007669"/>
    <property type="project" value="InterPro"/>
</dbReference>
<dbReference type="GO" id="GO:0008914">
    <property type="term" value="F:leucyl-tRNA--protein transferase activity"/>
    <property type="evidence" value="ECO:0007669"/>
    <property type="project" value="UniProtKB-UniRule"/>
</dbReference>
<dbReference type="GO" id="GO:0071596">
    <property type="term" value="P:ubiquitin-dependent protein catabolic process via the N-end rule pathway"/>
    <property type="evidence" value="ECO:0007669"/>
    <property type="project" value="InterPro"/>
</dbReference>
<dbReference type="HAMAP" id="MF_00689">
    <property type="entry name" value="Bpt"/>
    <property type="match status" value="1"/>
</dbReference>
<dbReference type="InterPro" id="IPR016181">
    <property type="entry name" value="Acyl_CoA_acyltransferase"/>
</dbReference>
<dbReference type="InterPro" id="IPR017138">
    <property type="entry name" value="Asp_Glu_LeuTrfase"/>
</dbReference>
<dbReference type="InterPro" id="IPR030700">
    <property type="entry name" value="N-end_Aminoacyl_Trfase"/>
</dbReference>
<dbReference type="InterPro" id="IPR007472">
    <property type="entry name" value="N-end_Aminoacyl_Trfase_C"/>
</dbReference>
<dbReference type="InterPro" id="IPR007471">
    <property type="entry name" value="N-end_Aminoacyl_Trfase_N"/>
</dbReference>
<dbReference type="NCBIfam" id="NF002342">
    <property type="entry name" value="PRK01305.1-3"/>
    <property type="match status" value="1"/>
</dbReference>
<dbReference type="NCBIfam" id="NF002345">
    <property type="entry name" value="PRK01305.2-2"/>
    <property type="match status" value="1"/>
</dbReference>
<dbReference type="NCBIfam" id="NF002346">
    <property type="entry name" value="PRK01305.2-3"/>
    <property type="match status" value="1"/>
</dbReference>
<dbReference type="PANTHER" id="PTHR21367">
    <property type="entry name" value="ARGININE-TRNA-PROTEIN TRANSFERASE 1"/>
    <property type="match status" value="1"/>
</dbReference>
<dbReference type="PANTHER" id="PTHR21367:SF1">
    <property type="entry name" value="ARGINYL-TRNA--PROTEIN TRANSFERASE 1"/>
    <property type="match status" value="1"/>
</dbReference>
<dbReference type="Pfam" id="PF04377">
    <property type="entry name" value="ATE_C"/>
    <property type="match status" value="1"/>
</dbReference>
<dbReference type="Pfam" id="PF04376">
    <property type="entry name" value="ATE_N"/>
    <property type="match status" value="1"/>
</dbReference>
<dbReference type="PIRSF" id="PIRSF037208">
    <property type="entry name" value="ATE_pro_prd"/>
    <property type="match status" value="1"/>
</dbReference>
<dbReference type="SUPFAM" id="SSF55729">
    <property type="entry name" value="Acyl-CoA N-acyltransferases (Nat)"/>
    <property type="match status" value="1"/>
</dbReference>